<dbReference type="EMBL" id="AE004439">
    <property type="protein sequence ID" value="AAK03239.1"/>
    <property type="molecule type" value="Genomic_DNA"/>
</dbReference>
<dbReference type="RefSeq" id="WP_005723548.1">
    <property type="nucleotide sequence ID" value="NC_002663.1"/>
</dbReference>
<dbReference type="SMR" id="Q9CLQ9"/>
<dbReference type="STRING" id="272843.PM1155"/>
<dbReference type="EnsemblBacteria" id="AAK03239">
    <property type="protein sequence ID" value="AAK03239"/>
    <property type="gene ID" value="PM1155"/>
</dbReference>
<dbReference type="GeneID" id="77206471"/>
<dbReference type="KEGG" id="pmu:PM1155"/>
<dbReference type="HOGENOM" id="CLU_069356_5_0_6"/>
<dbReference type="OrthoDB" id="9179041at2"/>
<dbReference type="Proteomes" id="UP000000809">
    <property type="component" value="Chromosome"/>
</dbReference>
<dbReference type="GO" id="GO:0043590">
    <property type="term" value="C:bacterial nucleoid"/>
    <property type="evidence" value="ECO:0007669"/>
    <property type="project" value="UniProtKB-UniRule"/>
</dbReference>
<dbReference type="GO" id="GO:0005737">
    <property type="term" value="C:cytoplasm"/>
    <property type="evidence" value="ECO:0007669"/>
    <property type="project" value="UniProtKB-UniRule"/>
</dbReference>
<dbReference type="GO" id="GO:0043565">
    <property type="term" value="F:sequence-specific DNA binding"/>
    <property type="evidence" value="ECO:0007669"/>
    <property type="project" value="UniProtKB-UniRule"/>
</dbReference>
<dbReference type="GO" id="GO:0051301">
    <property type="term" value="P:cell division"/>
    <property type="evidence" value="ECO:0007669"/>
    <property type="project" value="UniProtKB-KW"/>
</dbReference>
<dbReference type="GO" id="GO:0010974">
    <property type="term" value="P:negative regulation of division septum assembly"/>
    <property type="evidence" value="ECO:0007669"/>
    <property type="project" value="InterPro"/>
</dbReference>
<dbReference type="Gene3D" id="1.10.357.10">
    <property type="entry name" value="Tetracycline Repressor, domain 2"/>
    <property type="match status" value="1"/>
</dbReference>
<dbReference type="HAMAP" id="MF_01839">
    <property type="entry name" value="NO_factor_SlmA"/>
    <property type="match status" value="1"/>
</dbReference>
<dbReference type="InterPro" id="IPR009057">
    <property type="entry name" value="Homeodomain-like_sf"/>
</dbReference>
<dbReference type="InterPro" id="IPR050624">
    <property type="entry name" value="HTH-type_Tx_Regulator"/>
</dbReference>
<dbReference type="InterPro" id="IPR001647">
    <property type="entry name" value="HTH_TetR"/>
</dbReference>
<dbReference type="InterPro" id="IPR023769">
    <property type="entry name" value="NO_SlmA"/>
</dbReference>
<dbReference type="InterPro" id="IPR054580">
    <property type="entry name" value="SlmA-like_C"/>
</dbReference>
<dbReference type="InterPro" id="IPR036271">
    <property type="entry name" value="Tet_transcr_reg_TetR-rel_C_sf"/>
</dbReference>
<dbReference type="NCBIfam" id="NF007015">
    <property type="entry name" value="PRK09480.1"/>
    <property type="match status" value="1"/>
</dbReference>
<dbReference type="PANTHER" id="PTHR43479">
    <property type="entry name" value="ACREF/ENVCD OPERON REPRESSOR-RELATED"/>
    <property type="match status" value="1"/>
</dbReference>
<dbReference type="PANTHER" id="PTHR43479:SF11">
    <property type="entry name" value="ACREF_ENVCD OPERON REPRESSOR-RELATED"/>
    <property type="match status" value="1"/>
</dbReference>
<dbReference type="Pfam" id="PF22276">
    <property type="entry name" value="SlmA-like_C"/>
    <property type="match status" value="1"/>
</dbReference>
<dbReference type="Pfam" id="PF00440">
    <property type="entry name" value="TetR_N"/>
    <property type="match status" value="1"/>
</dbReference>
<dbReference type="SUPFAM" id="SSF46689">
    <property type="entry name" value="Homeodomain-like"/>
    <property type="match status" value="1"/>
</dbReference>
<dbReference type="SUPFAM" id="SSF48498">
    <property type="entry name" value="Tetracyclin repressor-like, C-terminal domain"/>
    <property type="match status" value="1"/>
</dbReference>
<dbReference type="PROSITE" id="PS50977">
    <property type="entry name" value="HTH_TETR_2"/>
    <property type="match status" value="1"/>
</dbReference>
<accession>Q9CLQ9</accession>
<comment type="function">
    <text evidence="1">Required for nucleoid occlusion (NO) phenomenon, which prevents Z-ring formation and cell division over the nucleoid. Acts as a DNA-associated cell division inhibitor that binds simultaneously chromosomal DNA and FtsZ, and disrupts the assembly of FtsZ polymers. SlmA-DNA-binding sequences (SBS) are dispersed on non-Ter regions of the chromosome, preventing FtsZ polymerization at these regions.</text>
</comment>
<comment type="subunit">
    <text evidence="1">Homodimer. Interacts with FtsZ.</text>
</comment>
<comment type="subcellular location">
    <subcellularLocation>
        <location evidence="1">Cytoplasm</location>
        <location evidence="1">Nucleoid</location>
    </subcellularLocation>
</comment>
<comment type="similarity">
    <text evidence="1">Belongs to the nucleoid occlusion factor SlmA family.</text>
</comment>
<evidence type="ECO:0000255" key="1">
    <source>
        <dbReference type="HAMAP-Rule" id="MF_01839"/>
    </source>
</evidence>
<gene>
    <name evidence="1" type="primary">slmA</name>
    <name type="ordered locus">PM1155</name>
</gene>
<sequence length="199" mass="23536">MQKPVKRSLKERRQQVLTVLTHMLHSERGMERMTTARIAAEVGVSEAALYRYYPSKTKMFEALIDNLEAHLFTRITQSVKNETHTAARVHNIMQMVLDFARKNPGLTRILTGHALMFEEPQLQARVAQFFDRLELQFINILQMRKLREGKGFDYEERVIAAHLVNLCEGHFMRYVRSNFRHSTQQSFEQQWRLLERLFA</sequence>
<name>SLMA_PASMU</name>
<proteinExistence type="inferred from homology"/>
<feature type="chain" id="PRO_0000198974" description="Nucleoid occlusion factor SlmA">
    <location>
        <begin position="1"/>
        <end position="199"/>
    </location>
</feature>
<feature type="domain" description="HTH tetR-type" evidence="1">
    <location>
        <begin position="11"/>
        <end position="71"/>
    </location>
</feature>
<feature type="DNA-binding region" description="H-T-H motif" evidence="1">
    <location>
        <begin position="34"/>
        <end position="53"/>
    </location>
</feature>
<keyword id="KW-0131">Cell cycle</keyword>
<keyword id="KW-0132">Cell division</keyword>
<keyword id="KW-0963">Cytoplasm</keyword>
<keyword id="KW-0238">DNA-binding</keyword>
<keyword id="KW-1185">Reference proteome</keyword>
<organism>
    <name type="scientific">Pasteurella multocida (strain Pm70)</name>
    <dbReference type="NCBI Taxonomy" id="272843"/>
    <lineage>
        <taxon>Bacteria</taxon>
        <taxon>Pseudomonadati</taxon>
        <taxon>Pseudomonadota</taxon>
        <taxon>Gammaproteobacteria</taxon>
        <taxon>Pasteurellales</taxon>
        <taxon>Pasteurellaceae</taxon>
        <taxon>Pasteurella</taxon>
    </lineage>
</organism>
<protein>
    <recommendedName>
        <fullName evidence="1">Nucleoid occlusion factor SlmA</fullName>
    </recommendedName>
</protein>
<reference key="1">
    <citation type="journal article" date="2001" name="Proc. Natl. Acad. Sci. U.S.A.">
        <title>Complete genomic sequence of Pasteurella multocida Pm70.</title>
        <authorList>
            <person name="May B.J."/>
            <person name="Zhang Q."/>
            <person name="Li L.L."/>
            <person name="Paustian M.L."/>
            <person name="Whittam T.S."/>
            <person name="Kapur V."/>
        </authorList>
    </citation>
    <scope>NUCLEOTIDE SEQUENCE [LARGE SCALE GENOMIC DNA]</scope>
    <source>
        <strain>Pm70</strain>
    </source>
</reference>